<feature type="chain" id="PRO_0000121177" description="Ras-related protein Rab11C">
    <location>
        <begin position="1"/>
        <end position="222"/>
    </location>
</feature>
<feature type="short sequence motif" description="Effector region" evidence="2">
    <location>
        <begin position="44"/>
        <end position="52"/>
    </location>
</feature>
<feature type="binding site" evidence="1">
    <location>
        <begin position="22"/>
        <end position="29"/>
    </location>
    <ligand>
        <name>GTP</name>
        <dbReference type="ChEBI" id="CHEBI:37565"/>
    </ligand>
</feature>
<feature type="binding site" evidence="1">
    <location>
        <begin position="70"/>
        <end position="74"/>
    </location>
    <ligand>
        <name>GTP</name>
        <dbReference type="ChEBI" id="CHEBI:37565"/>
    </ligand>
</feature>
<feature type="binding site" evidence="1">
    <location>
        <begin position="128"/>
        <end position="131"/>
    </location>
    <ligand>
        <name>GTP</name>
        <dbReference type="ChEBI" id="CHEBI:37565"/>
    </ligand>
</feature>
<feature type="lipid moiety-binding region" description="S-geranylgeranyl cysteine" evidence="1">
    <location>
        <position position="219"/>
    </location>
</feature>
<feature type="lipid moiety-binding region" description="S-geranylgeranyl cysteine" evidence="1">
    <location>
        <position position="220"/>
    </location>
</feature>
<sequence>MASGYGDASQKIDYVFKVVLIGDSAVGKTQILARFARNEFSLDSKATIGVEFQTRTLVIQHKSVKAQIWDTAGQERYRAVTSAYYRGAVGAMLVYDITKRQTFDHIPRWLEELRAHADRNIVIMLTGNKTDLEDQRAVPTEDAKEFAQKEGLFFLETSAMEATKLEDAFLTVLTEIFNIVNKKNLAADENQSNSNPASLTGKKILVPGPGQVIPGKKACCSS</sequence>
<reference key="1">
    <citation type="journal article" date="1995" name="Plant Physiol.">
        <title>Characterization of membrane-bound small GTP-binding proteins from Nicotiana tabacum.</title>
        <authorList>
            <person name="Haizel T."/>
            <person name="Merkle T."/>
            <person name="Turck F."/>
            <person name="Nagy F."/>
        </authorList>
    </citation>
    <scope>NUCLEOTIDE SEQUENCE [MRNA]</scope>
    <source>
        <strain>cv. SR1</strain>
    </source>
</reference>
<comment type="subcellular location">
    <subcellularLocation>
        <location evidence="3">Cell membrane</location>
        <topology evidence="3">Lipid-anchor</topology>
        <orientation evidence="3">Cytoplasmic side</orientation>
    </subcellularLocation>
</comment>
<comment type="similarity">
    <text evidence="3">Belongs to the small GTPase superfamily. Rab family.</text>
</comment>
<keyword id="KW-1003">Cell membrane</keyword>
<keyword id="KW-0342">GTP-binding</keyword>
<keyword id="KW-0449">Lipoprotein</keyword>
<keyword id="KW-0472">Membrane</keyword>
<keyword id="KW-0547">Nucleotide-binding</keyword>
<keyword id="KW-0636">Prenylation</keyword>
<keyword id="KW-1185">Reference proteome</keyword>
<accession>Q40520</accession>
<protein>
    <recommendedName>
        <fullName>Ras-related protein Rab11C</fullName>
    </recommendedName>
</protein>
<proteinExistence type="evidence at transcript level"/>
<evidence type="ECO:0000250" key="1"/>
<evidence type="ECO:0000255" key="2"/>
<evidence type="ECO:0000305" key="3"/>
<name>RB11C_TOBAC</name>
<gene>
    <name type="primary">RAB11C</name>
</gene>
<organism>
    <name type="scientific">Nicotiana tabacum</name>
    <name type="common">Common tobacco</name>
    <dbReference type="NCBI Taxonomy" id="4097"/>
    <lineage>
        <taxon>Eukaryota</taxon>
        <taxon>Viridiplantae</taxon>
        <taxon>Streptophyta</taxon>
        <taxon>Embryophyta</taxon>
        <taxon>Tracheophyta</taxon>
        <taxon>Spermatophyta</taxon>
        <taxon>Magnoliopsida</taxon>
        <taxon>eudicotyledons</taxon>
        <taxon>Gunneridae</taxon>
        <taxon>Pentapetalae</taxon>
        <taxon>asterids</taxon>
        <taxon>lamiids</taxon>
        <taxon>Solanales</taxon>
        <taxon>Solanaceae</taxon>
        <taxon>Nicotianoideae</taxon>
        <taxon>Nicotianeae</taxon>
        <taxon>Nicotiana</taxon>
    </lineage>
</organism>
<dbReference type="EMBL" id="L29268">
    <property type="protein sequence ID" value="AAA74112.1"/>
    <property type="molecule type" value="mRNA"/>
</dbReference>
<dbReference type="PIR" id="T03613">
    <property type="entry name" value="T03613"/>
</dbReference>
<dbReference type="SMR" id="Q40520"/>
<dbReference type="STRING" id="4097.Q40520"/>
<dbReference type="PaxDb" id="4097-Q40520"/>
<dbReference type="Proteomes" id="UP000084051">
    <property type="component" value="Unplaced"/>
</dbReference>
<dbReference type="GO" id="GO:0005768">
    <property type="term" value="C:endosome"/>
    <property type="evidence" value="ECO:0000318"/>
    <property type="project" value="GO_Central"/>
</dbReference>
<dbReference type="GO" id="GO:0005794">
    <property type="term" value="C:Golgi apparatus"/>
    <property type="evidence" value="ECO:0000318"/>
    <property type="project" value="GO_Central"/>
</dbReference>
<dbReference type="GO" id="GO:0005886">
    <property type="term" value="C:plasma membrane"/>
    <property type="evidence" value="ECO:0007669"/>
    <property type="project" value="UniProtKB-SubCell"/>
</dbReference>
<dbReference type="GO" id="GO:0005525">
    <property type="term" value="F:GTP binding"/>
    <property type="evidence" value="ECO:0000318"/>
    <property type="project" value="GO_Central"/>
</dbReference>
<dbReference type="GO" id="GO:0003924">
    <property type="term" value="F:GTPase activity"/>
    <property type="evidence" value="ECO:0000318"/>
    <property type="project" value="GO_Central"/>
</dbReference>
<dbReference type="CDD" id="cd01868">
    <property type="entry name" value="Rab11_like"/>
    <property type="match status" value="1"/>
</dbReference>
<dbReference type="FunFam" id="3.40.50.300:FF:000274">
    <property type="entry name" value="ras-related protein RABA5a"/>
    <property type="match status" value="1"/>
</dbReference>
<dbReference type="Gene3D" id="3.40.50.300">
    <property type="entry name" value="P-loop containing nucleotide triphosphate hydrolases"/>
    <property type="match status" value="1"/>
</dbReference>
<dbReference type="InterPro" id="IPR027417">
    <property type="entry name" value="P-loop_NTPase"/>
</dbReference>
<dbReference type="InterPro" id="IPR050209">
    <property type="entry name" value="Rab_GTPases_membrane_traffic"/>
</dbReference>
<dbReference type="InterPro" id="IPR005225">
    <property type="entry name" value="Small_GTP-bd"/>
</dbReference>
<dbReference type="InterPro" id="IPR001806">
    <property type="entry name" value="Small_GTPase"/>
</dbReference>
<dbReference type="NCBIfam" id="TIGR00231">
    <property type="entry name" value="small_GTP"/>
    <property type="match status" value="1"/>
</dbReference>
<dbReference type="PANTHER" id="PTHR47979">
    <property type="entry name" value="DRAB11-RELATED"/>
    <property type="match status" value="1"/>
</dbReference>
<dbReference type="Pfam" id="PF00071">
    <property type="entry name" value="Ras"/>
    <property type="match status" value="1"/>
</dbReference>
<dbReference type="PRINTS" id="PR00449">
    <property type="entry name" value="RASTRNSFRMNG"/>
</dbReference>
<dbReference type="SMART" id="SM00177">
    <property type="entry name" value="ARF"/>
    <property type="match status" value="1"/>
</dbReference>
<dbReference type="SMART" id="SM00175">
    <property type="entry name" value="RAB"/>
    <property type="match status" value="1"/>
</dbReference>
<dbReference type="SMART" id="SM00176">
    <property type="entry name" value="RAN"/>
    <property type="match status" value="1"/>
</dbReference>
<dbReference type="SMART" id="SM00173">
    <property type="entry name" value="RAS"/>
    <property type="match status" value="1"/>
</dbReference>
<dbReference type="SMART" id="SM00174">
    <property type="entry name" value="RHO"/>
    <property type="match status" value="1"/>
</dbReference>
<dbReference type="SUPFAM" id="SSF52540">
    <property type="entry name" value="P-loop containing nucleoside triphosphate hydrolases"/>
    <property type="match status" value="1"/>
</dbReference>
<dbReference type="PROSITE" id="PS51419">
    <property type="entry name" value="RAB"/>
    <property type="match status" value="1"/>
</dbReference>